<reference key="1">
    <citation type="journal article" date="2006" name="J. Bacteriol.">
        <title>Complete genome sequence of Yersinia pestis strains Antiqua and Nepal516: evidence of gene reduction in an emerging pathogen.</title>
        <authorList>
            <person name="Chain P.S.G."/>
            <person name="Hu P."/>
            <person name="Malfatti S.A."/>
            <person name="Radnedge L."/>
            <person name="Larimer F."/>
            <person name="Vergez L.M."/>
            <person name="Worsham P."/>
            <person name="Chu M.C."/>
            <person name="Andersen G.L."/>
        </authorList>
    </citation>
    <scope>NUCLEOTIDE SEQUENCE [LARGE SCALE GENOMIC DNA]</scope>
    <source>
        <strain>Nepal516</strain>
    </source>
</reference>
<reference key="2">
    <citation type="submission" date="2009-04" db="EMBL/GenBank/DDBJ databases">
        <title>Yersinia pestis Nepal516A whole genome shotgun sequencing project.</title>
        <authorList>
            <person name="Plunkett G. III"/>
            <person name="Anderson B.D."/>
            <person name="Baumler D.J."/>
            <person name="Burland V."/>
            <person name="Cabot E.L."/>
            <person name="Glasner J.D."/>
            <person name="Mau B."/>
            <person name="Neeno-Eckwall E."/>
            <person name="Perna N.T."/>
            <person name="Munk A.C."/>
            <person name="Tapia R."/>
            <person name="Green L.D."/>
            <person name="Rogers Y.C."/>
            <person name="Detter J.C."/>
            <person name="Bruce D.C."/>
            <person name="Brettin T.S."/>
        </authorList>
    </citation>
    <scope>NUCLEOTIDE SEQUENCE [LARGE SCALE GENOMIC DNA]</scope>
    <source>
        <strain>Nepal516</strain>
    </source>
</reference>
<sequence>MMPLGLFPLPRAAAVLLISLLTLPAQAAERVISLSPSTTELAYAAGLGDKLVAVSAYSDYPESAKKLEHVASWQGINVERILALKPDLILAWRGGNPQRPLDQLAALGIPIFYSDPTHIDQIASDLDKLAQYSPHPEQAHQAAEQFRQHVNTLRDRYARSQPKRTFLQFGTQPLFTSSGHTLQSEVVSLCGGENIFADSRVPWPQVSREQVMTRKPQVIVVSGTQSQVDNVSAFWLPQLVVPVIALNEDWFNRASPRILLAAQQLCQQMASIPTPVAESH</sequence>
<protein>
    <recommendedName>
        <fullName evidence="1">Vitamin B12-binding protein</fullName>
    </recommendedName>
</protein>
<comment type="function">
    <text evidence="1">Part of the ABC transporter complex BtuCDF involved in vitamin B12 import. Binds vitamin B12 and delivers it to the periplasmic surface of BtuC.</text>
</comment>
<comment type="subunit">
    <text evidence="1">The complex is composed of two ATP-binding proteins (BtuD), two transmembrane proteins (BtuC) and a solute-binding protein (BtuF).</text>
</comment>
<comment type="subcellular location">
    <subcellularLocation>
        <location evidence="1">Periplasm</location>
    </subcellularLocation>
</comment>
<comment type="similarity">
    <text evidence="1">Belongs to the BtuF family.</text>
</comment>
<proteinExistence type="inferred from homology"/>
<organism>
    <name type="scientific">Yersinia pestis bv. Antiqua (strain Nepal516)</name>
    <dbReference type="NCBI Taxonomy" id="377628"/>
    <lineage>
        <taxon>Bacteria</taxon>
        <taxon>Pseudomonadati</taxon>
        <taxon>Pseudomonadota</taxon>
        <taxon>Gammaproteobacteria</taxon>
        <taxon>Enterobacterales</taxon>
        <taxon>Yersiniaceae</taxon>
        <taxon>Yersinia</taxon>
    </lineage>
</organism>
<keyword id="KW-1015">Disulfide bond</keyword>
<keyword id="KW-0574">Periplasm</keyword>
<keyword id="KW-0732">Signal</keyword>
<keyword id="KW-0813">Transport</keyword>
<accession>Q1CLU2</accession>
<accession>C4GQ72</accession>
<dbReference type="EMBL" id="CP000305">
    <property type="protein sequence ID" value="ABG17038.1"/>
    <property type="molecule type" value="Genomic_DNA"/>
</dbReference>
<dbReference type="EMBL" id="ACNQ01000007">
    <property type="protein sequence ID" value="EEO77898.1"/>
    <property type="molecule type" value="Genomic_DNA"/>
</dbReference>
<dbReference type="RefSeq" id="WP_002222100.1">
    <property type="nucleotide sequence ID" value="NZ_ACNQ01000007.1"/>
</dbReference>
<dbReference type="SMR" id="Q1CLU2"/>
<dbReference type="GeneID" id="57975324"/>
<dbReference type="KEGG" id="ypn:YPN_0706"/>
<dbReference type="HOGENOM" id="CLU_038034_2_5_6"/>
<dbReference type="Proteomes" id="UP000008936">
    <property type="component" value="Chromosome"/>
</dbReference>
<dbReference type="GO" id="GO:0042597">
    <property type="term" value="C:periplasmic space"/>
    <property type="evidence" value="ECO:0007669"/>
    <property type="project" value="UniProtKB-SubCell"/>
</dbReference>
<dbReference type="GO" id="GO:0031419">
    <property type="term" value="F:cobalamin binding"/>
    <property type="evidence" value="ECO:0007669"/>
    <property type="project" value="InterPro"/>
</dbReference>
<dbReference type="GO" id="GO:0015889">
    <property type="term" value="P:cobalamin transport"/>
    <property type="evidence" value="ECO:0007669"/>
    <property type="project" value="UniProtKB-UniRule"/>
</dbReference>
<dbReference type="CDD" id="cd01144">
    <property type="entry name" value="BtuF"/>
    <property type="match status" value="1"/>
</dbReference>
<dbReference type="Gene3D" id="3.40.50.1980">
    <property type="entry name" value="Nitrogenase molybdenum iron protein domain"/>
    <property type="match status" value="2"/>
</dbReference>
<dbReference type="HAMAP" id="MF_01000">
    <property type="entry name" value="BtuF"/>
    <property type="match status" value="1"/>
</dbReference>
<dbReference type="InterPro" id="IPR002491">
    <property type="entry name" value="ABC_transptr_periplasmic_BD"/>
</dbReference>
<dbReference type="InterPro" id="IPR023544">
    <property type="entry name" value="ABC_transptr_vit_B12-bd"/>
</dbReference>
<dbReference type="InterPro" id="IPR054828">
    <property type="entry name" value="Vit_B12_bind_prot"/>
</dbReference>
<dbReference type="InterPro" id="IPR051030">
    <property type="entry name" value="Vitamin_B12-ABC_binding"/>
</dbReference>
<dbReference type="NCBIfam" id="NF002894">
    <property type="entry name" value="PRK03379.1"/>
    <property type="match status" value="1"/>
</dbReference>
<dbReference type="NCBIfam" id="NF038402">
    <property type="entry name" value="TroA_like"/>
    <property type="match status" value="1"/>
</dbReference>
<dbReference type="PANTHER" id="PTHR42860">
    <property type="entry name" value="VITAMIN B12-BINDING PROTEIN"/>
    <property type="match status" value="1"/>
</dbReference>
<dbReference type="PANTHER" id="PTHR42860:SF1">
    <property type="entry name" value="VITAMIN B12-BINDING PROTEIN"/>
    <property type="match status" value="1"/>
</dbReference>
<dbReference type="Pfam" id="PF01497">
    <property type="entry name" value="Peripla_BP_2"/>
    <property type="match status" value="1"/>
</dbReference>
<dbReference type="SUPFAM" id="SSF53807">
    <property type="entry name" value="Helical backbone' metal receptor"/>
    <property type="match status" value="1"/>
</dbReference>
<dbReference type="PROSITE" id="PS50983">
    <property type="entry name" value="FE_B12_PBP"/>
    <property type="match status" value="1"/>
</dbReference>
<evidence type="ECO:0000255" key="1">
    <source>
        <dbReference type="HAMAP-Rule" id="MF_01000"/>
    </source>
</evidence>
<gene>
    <name evidence="1" type="primary">btuF</name>
    <name type="ordered locus">YPN_0706</name>
    <name type="ORF">YP516_0750</name>
</gene>
<feature type="signal peptide" evidence="1">
    <location>
        <begin position="1"/>
        <end position="27"/>
    </location>
</feature>
<feature type="chain" id="PRO_5000115146" description="Vitamin B12-binding protein">
    <location>
        <begin position="28"/>
        <end position="280"/>
    </location>
</feature>
<feature type="domain" description="Fe/B12 periplasmic-binding" evidence="1">
    <location>
        <begin position="30"/>
        <end position="277"/>
    </location>
</feature>
<feature type="binding site" evidence="1">
    <location>
        <position position="57"/>
    </location>
    <ligand>
        <name>cyanocob(III)alamin</name>
        <dbReference type="ChEBI" id="CHEBI:17439"/>
    </ligand>
</feature>
<feature type="site" description="Important for BtuC binding" evidence="1">
    <location>
        <position position="79"/>
    </location>
</feature>
<feature type="site" description="Important for BtuC binding" evidence="1">
    <location>
        <position position="209"/>
    </location>
</feature>
<feature type="disulfide bond" evidence="1">
    <location>
        <begin position="190"/>
        <end position="266"/>
    </location>
</feature>
<name>BTUF_YERPN</name>